<comment type="function">
    <text evidence="1">Converts the free carboxyl group of a malonyl-thioester to its methyl ester by transfer of a methyl group from S-adenosyl-L-methionine (SAM). It allows to synthesize pimeloyl-ACP via the fatty acid synthetic pathway.</text>
</comment>
<comment type="catalytic activity">
    <reaction evidence="1">
        <text>malonyl-[ACP] + S-adenosyl-L-methionine = malonyl-[ACP] methyl ester + S-adenosyl-L-homocysteine</text>
        <dbReference type="Rhea" id="RHEA:17105"/>
        <dbReference type="Rhea" id="RHEA-COMP:9623"/>
        <dbReference type="Rhea" id="RHEA-COMP:9954"/>
        <dbReference type="ChEBI" id="CHEBI:57856"/>
        <dbReference type="ChEBI" id="CHEBI:59789"/>
        <dbReference type="ChEBI" id="CHEBI:78449"/>
        <dbReference type="ChEBI" id="CHEBI:78845"/>
        <dbReference type="EC" id="2.1.1.197"/>
    </reaction>
</comment>
<comment type="pathway">
    <text evidence="1">Cofactor biosynthesis; biotin biosynthesis.</text>
</comment>
<comment type="similarity">
    <text evidence="1">Belongs to the methyltransferase superfamily.</text>
</comment>
<name>BIOC_GEOSL</name>
<feature type="chain" id="PRO_0000412499" description="Malonyl-[acyl-carrier protein] O-methyltransferase">
    <location>
        <begin position="1"/>
        <end position="267"/>
    </location>
</feature>
<accession>Q749W5</accession>
<proteinExistence type="inferred from homology"/>
<dbReference type="EC" id="2.1.1.197" evidence="1"/>
<dbReference type="EMBL" id="AE017180">
    <property type="protein sequence ID" value="AAR35999.1"/>
    <property type="molecule type" value="Genomic_DNA"/>
</dbReference>
<dbReference type="RefSeq" id="NP_953672.1">
    <property type="nucleotide sequence ID" value="NC_002939.5"/>
</dbReference>
<dbReference type="RefSeq" id="WP_010943265.1">
    <property type="nucleotide sequence ID" value="NC_002939.5"/>
</dbReference>
<dbReference type="SMR" id="Q749W5"/>
<dbReference type="FunCoup" id="Q749W5">
    <property type="interactions" value="251"/>
</dbReference>
<dbReference type="STRING" id="243231.GSU2627"/>
<dbReference type="EnsemblBacteria" id="AAR35999">
    <property type="protein sequence ID" value="AAR35999"/>
    <property type="gene ID" value="GSU2627"/>
</dbReference>
<dbReference type="KEGG" id="gsu:GSU2627"/>
<dbReference type="PATRIC" id="fig|243231.5.peg.2657"/>
<dbReference type="eggNOG" id="COG2226">
    <property type="taxonomic scope" value="Bacteria"/>
</dbReference>
<dbReference type="HOGENOM" id="CLU_046586_2_2_7"/>
<dbReference type="InParanoid" id="Q749W5"/>
<dbReference type="OrthoDB" id="9786194at2"/>
<dbReference type="UniPathway" id="UPA00078"/>
<dbReference type="Proteomes" id="UP000000577">
    <property type="component" value="Chromosome"/>
</dbReference>
<dbReference type="GO" id="GO:0010340">
    <property type="term" value="F:carboxyl-O-methyltransferase activity"/>
    <property type="evidence" value="ECO:0007669"/>
    <property type="project" value="UniProtKB-UniRule"/>
</dbReference>
<dbReference type="GO" id="GO:0102130">
    <property type="term" value="F:malonyl-CoA methyltransferase activity"/>
    <property type="evidence" value="ECO:0007669"/>
    <property type="project" value="UniProtKB-EC"/>
</dbReference>
<dbReference type="GO" id="GO:0008757">
    <property type="term" value="F:S-adenosylmethionine-dependent methyltransferase activity"/>
    <property type="evidence" value="ECO:0007669"/>
    <property type="project" value="InterPro"/>
</dbReference>
<dbReference type="GO" id="GO:0009102">
    <property type="term" value="P:biotin biosynthetic process"/>
    <property type="evidence" value="ECO:0007669"/>
    <property type="project" value="UniProtKB-UniRule"/>
</dbReference>
<dbReference type="GO" id="GO:0032259">
    <property type="term" value="P:methylation"/>
    <property type="evidence" value="ECO:0007669"/>
    <property type="project" value="UniProtKB-KW"/>
</dbReference>
<dbReference type="CDD" id="cd02440">
    <property type="entry name" value="AdoMet_MTases"/>
    <property type="match status" value="1"/>
</dbReference>
<dbReference type="Gene3D" id="3.40.50.150">
    <property type="entry name" value="Vaccinia Virus protein VP39"/>
    <property type="match status" value="1"/>
</dbReference>
<dbReference type="HAMAP" id="MF_00835">
    <property type="entry name" value="BioC"/>
    <property type="match status" value="1"/>
</dbReference>
<dbReference type="InterPro" id="IPR011814">
    <property type="entry name" value="BioC"/>
</dbReference>
<dbReference type="InterPro" id="IPR050602">
    <property type="entry name" value="Malonyl-ACP_OMT"/>
</dbReference>
<dbReference type="InterPro" id="IPR013216">
    <property type="entry name" value="Methyltransf_11"/>
</dbReference>
<dbReference type="InterPro" id="IPR029063">
    <property type="entry name" value="SAM-dependent_MTases_sf"/>
</dbReference>
<dbReference type="NCBIfam" id="TIGR02072">
    <property type="entry name" value="BioC"/>
    <property type="match status" value="1"/>
</dbReference>
<dbReference type="PANTHER" id="PTHR13090">
    <property type="entry name" value="ARGININE-HYDROXYLASE NDUFAF5, MITOCHONDRIAL"/>
    <property type="match status" value="1"/>
</dbReference>
<dbReference type="PANTHER" id="PTHR13090:SF1">
    <property type="entry name" value="ARGININE-HYDROXYLASE NDUFAF5, MITOCHONDRIAL"/>
    <property type="match status" value="1"/>
</dbReference>
<dbReference type="Pfam" id="PF08241">
    <property type="entry name" value="Methyltransf_11"/>
    <property type="match status" value="1"/>
</dbReference>
<dbReference type="SUPFAM" id="SSF53335">
    <property type="entry name" value="S-adenosyl-L-methionine-dependent methyltransferases"/>
    <property type="match status" value="1"/>
</dbReference>
<reference key="1">
    <citation type="journal article" date="2003" name="Science">
        <title>Genome of Geobacter sulfurreducens: metal reduction in subsurface environments.</title>
        <authorList>
            <person name="Methe B.A."/>
            <person name="Nelson K.E."/>
            <person name="Eisen J.A."/>
            <person name="Paulsen I.T."/>
            <person name="Nelson W.C."/>
            <person name="Heidelberg J.F."/>
            <person name="Wu D."/>
            <person name="Wu M."/>
            <person name="Ward N.L."/>
            <person name="Beanan M.J."/>
            <person name="Dodson R.J."/>
            <person name="Madupu R."/>
            <person name="Brinkac L.M."/>
            <person name="Daugherty S.C."/>
            <person name="DeBoy R.T."/>
            <person name="Durkin A.S."/>
            <person name="Gwinn M.L."/>
            <person name="Kolonay J.F."/>
            <person name="Sullivan S.A."/>
            <person name="Haft D.H."/>
            <person name="Selengut J."/>
            <person name="Davidsen T.M."/>
            <person name="Zafar N."/>
            <person name="White O."/>
            <person name="Tran B."/>
            <person name="Romero C."/>
            <person name="Forberger H.A."/>
            <person name="Weidman J.F."/>
            <person name="Khouri H.M."/>
            <person name="Feldblyum T.V."/>
            <person name="Utterback T.R."/>
            <person name="Van Aken S.E."/>
            <person name="Lovley D.R."/>
            <person name="Fraser C.M."/>
        </authorList>
    </citation>
    <scope>NUCLEOTIDE SEQUENCE [LARGE SCALE GENOMIC DNA]</scope>
    <source>
        <strain>ATCC 51573 / DSM 12127 / PCA</strain>
    </source>
</reference>
<protein>
    <recommendedName>
        <fullName evidence="1">Malonyl-[acyl-carrier protein] O-methyltransferase</fullName>
        <shortName evidence="1">Malonyl-ACP O-methyltransferase</shortName>
        <ecNumber evidence="1">2.1.1.197</ecNumber>
    </recommendedName>
    <alternativeName>
        <fullName evidence="1">Biotin synthesis protein BioC</fullName>
    </alternativeName>
</protein>
<keyword id="KW-0093">Biotin biosynthesis</keyword>
<keyword id="KW-0489">Methyltransferase</keyword>
<keyword id="KW-1185">Reference proteome</keyword>
<keyword id="KW-0949">S-adenosyl-L-methionine</keyword>
<keyword id="KW-0808">Transferase</keyword>
<organism>
    <name type="scientific">Geobacter sulfurreducens (strain ATCC 51573 / DSM 12127 / PCA)</name>
    <dbReference type="NCBI Taxonomy" id="243231"/>
    <lineage>
        <taxon>Bacteria</taxon>
        <taxon>Pseudomonadati</taxon>
        <taxon>Thermodesulfobacteriota</taxon>
        <taxon>Desulfuromonadia</taxon>
        <taxon>Geobacterales</taxon>
        <taxon>Geobacteraceae</taxon>
        <taxon>Geobacter</taxon>
    </lineage>
</organism>
<sequence length="267" mass="29414">MIDRRKVRNAFHRGAADYDAYAAVQKRVMERILSLLFAEGVEPARILDVGAGTGALALRLADRYPSAAITCVDLAHGMARQARDNLGRTMERLVAVADAEHLPLRDGVFDLVVSTSTFQWLTTLDRAFAEARRVLADDGLFAFALFGDGTFKELKASYRAALHSVPRGGRDRTHRFFTRDEVRAALARAGFRSVEVFDEDEVEYHPDVPAFLRSVKRIGAGNASPVAGRGLSGRRVMETMMRTYAERFGGADGIPATYTVVYGVGKR</sequence>
<evidence type="ECO:0000255" key="1">
    <source>
        <dbReference type="HAMAP-Rule" id="MF_00835"/>
    </source>
</evidence>
<gene>
    <name evidence="1" type="primary">bioC</name>
    <name type="ordered locus">GSU2627</name>
</gene>